<organism>
    <name type="scientific">Homo sapiens</name>
    <name type="common">Human</name>
    <dbReference type="NCBI Taxonomy" id="9606"/>
    <lineage>
        <taxon>Eukaryota</taxon>
        <taxon>Metazoa</taxon>
        <taxon>Chordata</taxon>
        <taxon>Craniata</taxon>
        <taxon>Vertebrata</taxon>
        <taxon>Euteleostomi</taxon>
        <taxon>Mammalia</taxon>
        <taxon>Eutheria</taxon>
        <taxon>Euarchontoglires</taxon>
        <taxon>Primates</taxon>
        <taxon>Haplorrhini</taxon>
        <taxon>Catarrhini</taxon>
        <taxon>Hominidae</taxon>
        <taxon>Homo</taxon>
    </lineage>
</organism>
<protein>
    <recommendedName>
        <fullName>WD repeat-containing protein 17</fullName>
    </recommendedName>
</protein>
<dbReference type="EMBL" id="AF492460">
    <property type="protein sequence ID" value="AAN64030.1"/>
    <property type="molecule type" value="mRNA"/>
</dbReference>
<dbReference type="EMBL" id="AC093605">
    <property type="status" value="NOT_ANNOTATED_CDS"/>
    <property type="molecule type" value="Genomic_DNA"/>
</dbReference>
<dbReference type="EMBL" id="BC146812">
    <property type="status" value="NOT_ANNOTATED_CDS"/>
    <property type="molecule type" value="mRNA"/>
</dbReference>
<dbReference type="EMBL" id="DQ426895">
    <property type="protein sequence ID" value="ABD90546.1"/>
    <property type="molecule type" value="mRNA"/>
</dbReference>
<dbReference type="EMBL" id="DQ426896">
    <property type="protein sequence ID" value="ABD90547.1"/>
    <property type="molecule type" value="mRNA"/>
</dbReference>
<dbReference type="CCDS" id="CCDS3825.1">
    <molecule id="Q8IZU2-1"/>
</dbReference>
<dbReference type="CCDS" id="CCDS43284.2">
    <molecule id="Q8IZU2-2"/>
</dbReference>
<dbReference type="RefSeq" id="NP_733828.2">
    <molecule id="Q8IZU2-1"/>
    <property type="nucleotide sequence ID" value="NM_170710.4"/>
</dbReference>
<dbReference type="RefSeq" id="NP_851782.3">
    <molecule id="Q8IZU2-2"/>
    <property type="nucleotide sequence ID" value="NM_181265.4"/>
</dbReference>
<dbReference type="SMR" id="Q8IZU2"/>
<dbReference type="BioGRID" id="125544">
    <property type="interactions" value="8"/>
</dbReference>
<dbReference type="FunCoup" id="Q8IZU2">
    <property type="interactions" value="290"/>
</dbReference>
<dbReference type="IntAct" id="Q8IZU2">
    <property type="interactions" value="6"/>
</dbReference>
<dbReference type="STRING" id="9606.ENSP00000280190"/>
<dbReference type="iPTMnet" id="Q8IZU2"/>
<dbReference type="PhosphoSitePlus" id="Q8IZU2"/>
<dbReference type="SwissPalm" id="Q8IZU2"/>
<dbReference type="BioMuta" id="WDR17"/>
<dbReference type="DMDM" id="215273912"/>
<dbReference type="jPOST" id="Q8IZU2"/>
<dbReference type="MassIVE" id="Q8IZU2"/>
<dbReference type="PaxDb" id="9606-ENSP00000280190"/>
<dbReference type="PeptideAtlas" id="Q8IZU2"/>
<dbReference type="ProteomicsDB" id="17667"/>
<dbReference type="ProteomicsDB" id="71430">
    <molecule id="Q8IZU2-1"/>
</dbReference>
<dbReference type="Pumba" id="Q8IZU2"/>
<dbReference type="Antibodypedia" id="51087">
    <property type="antibodies" value="12 antibodies from 6 providers"/>
</dbReference>
<dbReference type="DNASU" id="116966"/>
<dbReference type="Ensembl" id="ENST00000280190.8">
    <molecule id="Q8IZU2-1"/>
    <property type="protein sequence ID" value="ENSP00000280190.4"/>
    <property type="gene ID" value="ENSG00000150627.16"/>
</dbReference>
<dbReference type="Ensembl" id="ENST00000508596.6">
    <molecule id="Q8IZU2-2"/>
    <property type="protein sequence ID" value="ENSP00000422763.1"/>
    <property type="gene ID" value="ENSG00000150627.16"/>
</dbReference>
<dbReference type="GeneID" id="116966"/>
<dbReference type="KEGG" id="hsa:116966"/>
<dbReference type="MANE-Select" id="ENST00000508596.6">
    <molecule id="Q8IZU2-2"/>
    <property type="protein sequence ID" value="ENSP00000422763.1"/>
    <property type="RefSeq nucleotide sequence ID" value="NM_181265.4"/>
    <property type="RefSeq protein sequence ID" value="NP_851782.3"/>
</dbReference>
<dbReference type="UCSC" id="uc003iuj.4">
    <molecule id="Q8IZU2-1"/>
    <property type="organism name" value="human"/>
</dbReference>
<dbReference type="AGR" id="HGNC:16661"/>
<dbReference type="CTD" id="116966"/>
<dbReference type="DisGeNET" id="116966"/>
<dbReference type="GeneCards" id="WDR17"/>
<dbReference type="HGNC" id="HGNC:16661">
    <property type="gene designation" value="WDR17"/>
</dbReference>
<dbReference type="HPA" id="ENSG00000150627">
    <property type="expression patterns" value="Tissue enhanced (brain, pituitary gland, retina)"/>
</dbReference>
<dbReference type="MalaCards" id="WDR17"/>
<dbReference type="MIM" id="609005">
    <property type="type" value="gene"/>
</dbReference>
<dbReference type="neXtProt" id="NX_Q8IZU2"/>
<dbReference type="OpenTargets" id="ENSG00000150627"/>
<dbReference type="PharmGKB" id="PA38181"/>
<dbReference type="VEuPathDB" id="HostDB:ENSG00000150627"/>
<dbReference type="eggNOG" id="KOG0273">
    <property type="taxonomic scope" value="Eukaryota"/>
</dbReference>
<dbReference type="GeneTree" id="ENSGT00940000158602"/>
<dbReference type="HOGENOM" id="CLU_004491_1_0_1"/>
<dbReference type="InParanoid" id="Q8IZU2"/>
<dbReference type="OMA" id="GVFIWDI"/>
<dbReference type="OrthoDB" id="2161379at2759"/>
<dbReference type="PAN-GO" id="Q8IZU2">
    <property type="GO annotations" value="0 GO annotations based on evolutionary models"/>
</dbReference>
<dbReference type="PhylomeDB" id="Q8IZU2"/>
<dbReference type="TreeFam" id="TF323190"/>
<dbReference type="PathwayCommons" id="Q8IZU2"/>
<dbReference type="SignaLink" id="Q8IZU2"/>
<dbReference type="BioGRID-ORCS" id="116966">
    <property type="hits" value="11 hits in 1143 CRISPR screens"/>
</dbReference>
<dbReference type="GenomeRNAi" id="116966"/>
<dbReference type="Pharos" id="Q8IZU2">
    <property type="development level" value="Tdark"/>
</dbReference>
<dbReference type="PRO" id="PR:Q8IZU2"/>
<dbReference type="Proteomes" id="UP000005640">
    <property type="component" value="Chromosome 4"/>
</dbReference>
<dbReference type="RNAct" id="Q8IZU2">
    <property type="molecule type" value="protein"/>
</dbReference>
<dbReference type="Bgee" id="ENSG00000150627">
    <property type="expression patterns" value="Expressed in endothelial cell and 133 other cell types or tissues"/>
</dbReference>
<dbReference type="ExpressionAtlas" id="Q8IZU2">
    <property type="expression patterns" value="baseline and differential"/>
</dbReference>
<dbReference type="CDD" id="cd00200">
    <property type="entry name" value="WD40"/>
    <property type="match status" value="1"/>
</dbReference>
<dbReference type="Gene3D" id="2.130.10.10">
    <property type="entry name" value="YVTN repeat-like/Quinoprotein amine dehydrogenase"/>
    <property type="match status" value="4"/>
</dbReference>
<dbReference type="InterPro" id="IPR020472">
    <property type="entry name" value="G-protein_beta_WD-40_rep"/>
</dbReference>
<dbReference type="InterPro" id="IPR011047">
    <property type="entry name" value="Quinoprotein_ADH-like_sf"/>
</dbReference>
<dbReference type="InterPro" id="IPR015943">
    <property type="entry name" value="WD40/YVTN_repeat-like_dom_sf"/>
</dbReference>
<dbReference type="InterPro" id="IPR019775">
    <property type="entry name" value="WD40_repeat_CS"/>
</dbReference>
<dbReference type="InterPro" id="IPR036322">
    <property type="entry name" value="WD40_repeat_dom_sf"/>
</dbReference>
<dbReference type="InterPro" id="IPR001680">
    <property type="entry name" value="WD40_rpt"/>
</dbReference>
<dbReference type="PANTHER" id="PTHR44464">
    <property type="entry name" value="WD REPEAT-CONTAINING PROTEIN 17"/>
    <property type="match status" value="1"/>
</dbReference>
<dbReference type="PANTHER" id="PTHR44464:SF1">
    <property type="entry name" value="WD REPEAT-CONTAINING PROTEIN 17"/>
    <property type="match status" value="1"/>
</dbReference>
<dbReference type="Pfam" id="PF00400">
    <property type="entry name" value="WD40"/>
    <property type="match status" value="7"/>
</dbReference>
<dbReference type="PRINTS" id="PR00320">
    <property type="entry name" value="GPROTEINBRPT"/>
</dbReference>
<dbReference type="SMART" id="SM00320">
    <property type="entry name" value="WD40"/>
    <property type="match status" value="11"/>
</dbReference>
<dbReference type="SUPFAM" id="SSF50998">
    <property type="entry name" value="Quinoprotein alcohol dehydrogenase-like"/>
    <property type="match status" value="1"/>
</dbReference>
<dbReference type="SUPFAM" id="SSF50978">
    <property type="entry name" value="WD40 repeat-like"/>
    <property type="match status" value="1"/>
</dbReference>
<dbReference type="PROSITE" id="PS00678">
    <property type="entry name" value="WD_REPEATS_1"/>
    <property type="match status" value="2"/>
</dbReference>
<dbReference type="PROSITE" id="PS50082">
    <property type="entry name" value="WD_REPEATS_2"/>
    <property type="match status" value="5"/>
</dbReference>
<dbReference type="PROSITE" id="PS50294">
    <property type="entry name" value="WD_REPEATS_REGION"/>
    <property type="match status" value="2"/>
</dbReference>
<sequence length="1322" mass="147703">MAWMTYISNWFEQDDWYEGLQRANMSQVRQVGLLAAGCQPWNKDVCAASGDRFAYCATLAIYIYQLDHRYNEFKLHAIMSEHKKTITAISWCPHNPDLFASGSTDNLVIIWNVAEQKVIAKLDSTKGIPASLSWCWNAEDVVAFVSHRGPLFIWTISGPDSGVIVHKDAHSFLSDICMFRWHTHQKGKVVFGHIDGSLSIFHPGNKNQKHVLRPESLEGTDEEDPVTALEWDPLSTDYLLVVNLHYGIRLVDSESLSCITTFNLPSAAASVQCLAWVPSAPGMFITGDSQVGVLRIWNVSRTTPIDNLKLKKTGFHCLHVLNSPPRKKFSVQSPTKNHYTSSTSEAVPPPTLTQNQAFSLPPGHAVCCFLDGGVGLYDMGAKKWDFLRDLGHVETIFDCKFKPDDPNLLATASFDGTIKVWDINTLTAVYTSPGNEGVIYSLSWAPGGLNCIAGGTSRNGAFIWNVQKGKIIQRFNEHGTNGIFCIAWSHKDSKRIATCSSDGFCIIRTIDGKVLHKYKHPAAVFGCDWSQNNKDMIATGCEDTNVRVYYVATSSDQPLKVFSGHTAKVFHVKWSPLREGILCSGSDDGTVRIWDYTQDACINILNGHTAPVRGLMWNTEIPYLLISGSWDYTIKVWDTREGTCVDTVYDHGADVYGLTCHPSRPFTMASCSRDSTVRLWSLTALVTPVQINILADRSWEEIIGNTDYAIEPGTPPLLCGKVSRDIRQEIEKLTANSQVKKLRWFSECLSPPGGSDNLWNLVAVIKGQDDSLLPQNYCKGIMHLKHLIKFRTSEAQELTTVKMSKFGGGIGVPAKEERLKEAAEIHLRLGQIQRYCELMVELGEWDKALSIAPGVSVKYWKKLMQRRADQLIQEDKDDVIPYCIAIGDVKKLVHFFMSRGQLKEALLVAQAACEGNMQPLHVSVPKGASYSDDIYKEDFNELLHKVSKELAEWYFQDGRAVLAACCHLAIDNIELAMAYLIRGNELELAVCVGTVLGESAAPATHYALELLARKCMMISVCFPCVGYSVPFCYVNRNLAADLLLMIPDNELHLIKLCAFYPGCTEEINDLHDKCKLPTVEECMQLAETARADDNIFETVKYYLLSQEPEKALPIGISFVKEYISSSDWTLDTIYPVLDLLSYIRTEKLLLHTCTEARNELLILCGYIGALLAIRRQYQSIVPALYEYTSQLLKRREVSVPLKIEYLSEELDAWRACTQSTNRSLEDSPYTPPSDSQRMIYATLLKRLKEESLKGIIGPDYVTGSNLPSHSDIHISCLTGLKIQGPVFFLEDGKSAISLNDALMWAKVNPFSPLGTGIRLNPF</sequence>
<keyword id="KW-0025">Alternative splicing</keyword>
<keyword id="KW-1267">Proteomics identification</keyword>
<keyword id="KW-1185">Reference proteome</keyword>
<keyword id="KW-0677">Repeat</keyword>
<keyword id="KW-0853">WD repeat</keyword>
<accession>Q8IZU2</accession>
<accession>E7EQX0</accession>
<accession>Q0QD35</accession>
<name>WDR17_HUMAN</name>
<comment type="alternative products">
    <event type="alternative splicing"/>
    <isoform>
        <id>Q8IZU2-1</id>
        <name>1</name>
        <sequence type="displayed"/>
    </isoform>
    <isoform>
        <id>Q8IZU2-2</id>
        <name>2</name>
        <sequence type="described" ref="VSP_047201 VSP_047202"/>
    </isoform>
</comment>
<comment type="sequence caution" evidence="6">
    <conflict type="frameshift">
        <sequence resource="EMBL" id="BC146812"/>
    </conflict>
</comment>
<reference key="1">
    <citation type="journal article" date="2002" name="Biochim. Biophys. Acta">
        <title>Cloning and characterization of WDR17, a novel WD repeat-containing gene on chromosome 4q34.</title>
        <authorList>
            <person name="Stohr H."/>
            <person name="Mohr N."/>
            <person name="Frohlich S."/>
            <person name="Mehdi S.Q."/>
            <person name="Bhattacharya S.S."/>
            <person name="Weber B.H.F."/>
        </authorList>
    </citation>
    <scope>NUCLEOTIDE SEQUENCE [MRNA] (ISOFORM 1)</scope>
    <scope>VARIANT THR-1295</scope>
    <source>
        <tissue>Retina</tissue>
    </source>
</reference>
<reference key="2">
    <citation type="journal article" date="2005" name="Nature">
        <title>Generation and annotation of the DNA sequences of human chromosomes 2 and 4.</title>
        <authorList>
            <person name="Hillier L.W."/>
            <person name="Graves T.A."/>
            <person name="Fulton R.S."/>
            <person name="Fulton L.A."/>
            <person name="Pepin K.H."/>
            <person name="Minx P."/>
            <person name="Wagner-McPherson C."/>
            <person name="Layman D."/>
            <person name="Wylie K."/>
            <person name="Sekhon M."/>
            <person name="Becker M.C."/>
            <person name="Fewell G.A."/>
            <person name="Delehaunty K.D."/>
            <person name="Miner T.L."/>
            <person name="Nash W.E."/>
            <person name="Kremitzki C."/>
            <person name="Oddy L."/>
            <person name="Du H."/>
            <person name="Sun H."/>
            <person name="Bradshaw-Cordum H."/>
            <person name="Ali J."/>
            <person name="Carter J."/>
            <person name="Cordes M."/>
            <person name="Harris A."/>
            <person name="Isak A."/>
            <person name="van Brunt A."/>
            <person name="Nguyen C."/>
            <person name="Du F."/>
            <person name="Courtney L."/>
            <person name="Kalicki J."/>
            <person name="Ozersky P."/>
            <person name="Abbott S."/>
            <person name="Armstrong J."/>
            <person name="Belter E.A."/>
            <person name="Caruso L."/>
            <person name="Cedroni M."/>
            <person name="Cotton M."/>
            <person name="Davidson T."/>
            <person name="Desai A."/>
            <person name="Elliott G."/>
            <person name="Erb T."/>
            <person name="Fronick C."/>
            <person name="Gaige T."/>
            <person name="Haakenson W."/>
            <person name="Haglund K."/>
            <person name="Holmes A."/>
            <person name="Harkins R."/>
            <person name="Kim K."/>
            <person name="Kruchowski S.S."/>
            <person name="Strong C.M."/>
            <person name="Grewal N."/>
            <person name="Goyea E."/>
            <person name="Hou S."/>
            <person name="Levy A."/>
            <person name="Martinka S."/>
            <person name="Mead K."/>
            <person name="McLellan M.D."/>
            <person name="Meyer R."/>
            <person name="Randall-Maher J."/>
            <person name="Tomlinson C."/>
            <person name="Dauphin-Kohlberg S."/>
            <person name="Kozlowicz-Reilly A."/>
            <person name="Shah N."/>
            <person name="Swearengen-Shahid S."/>
            <person name="Snider J."/>
            <person name="Strong J.T."/>
            <person name="Thompson J."/>
            <person name="Yoakum M."/>
            <person name="Leonard S."/>
            <person name="Pearman C."/>
            <person name="Trani L."/>
            <person name="Radionenko M."/>
            <person name="Waligorski J.E."/>
            <person name="Wang C."/>
            <person name="Rock S.M."/>
            <person name="Tin-Wollam A.-M."/>
            <person name="Maupin R."/>
            <person name="Latreille P."/>
            <person name="Wendl M.C."/>
            <person name="Yang S.-P."/>
            <person name="Pohl C."/>
            <person name="Wallis J.W."/>
            <person name="Spieth J."/>
            <person name="Bieri T.A."/>
            <person name="Berkowicz N."/>
            <person name="Nelson J.O."/>
            <person name="Osborne J."/>
            <person name="Ding L."/>
            <person name="Meyer R."/>
            <person name="Sabo A."/>
            <person name="Shotland Y."/>
            <person name="Sinha P."/>
            <person name="Wohldmann P.E."/>
            <person name="Cook L.L."/>
            <person name="Hickenbotham M.T."/>
            <person name="Eldred J."/>
            <person name="Williams D."/>
            <person name="Jones T.A."/>
            <person name="She X."/>
            <person name="Ciccarelli F.D."/>
            <person name="Izaurralde E."/>
            <person name="Taylor J."/>
            <person name="Schmutz J."/>
            <person name="Myers R.M."/>
            <person name="Cox D.R."/>
            <person name="Huang X."/>
            <person name="McPherson J.D."/>
            <person name="Mardis E.R."/>
            <person name="Clifton S.W."/>
            <person name="Warren W.C."/>
            <person name="Chinwalla A.T."/>
            <person name="Eddy S.R."/>
            <person name="Marra M.A."/>
            <person name="Ovcharenko I."/>
            <person name="Furey T.S."/>
            <person name="Miller W."/>
            <person name="Eichler E.E."/>
            <person name="Bork P."/>
            <person name="Suyama M."/>
            <person name="Torrents D."/>
            <person name="Waterston R.H."/>
            <person name="Wilson R.K."/>
        </authorList>
    </citation>
    <scope>NUCLEOTIDE SEQUENCE [LARGE SCALE GENOMIC DNA]</scope>
</reference>
<reference key="3">
    <citation type="journal article" date="2004" name="Genome Res.">
        <title>The status, quality, and expansion of the NIH full-length cDNA project: the Mammalian Gene Collection (MGC).</title>
        <authorList>
            <consortium name="The MGC Project Team"/>
        </authorList>
    </citation>
    <scope>NUCLEOTIDE SEQUENCE [LARGE SCALE MRNA] (ISOFORM 2)</scope>
    <scope>VARIANTS THR-814; SER-913 AND THR-1215</scope>
</reference>
<reference key="4">
    <citation type="journal article" date="2007" name="BMC Genomics">
        <title>Mapping of transcription start sites of human retina expressed genes.</title>
        <authorList>
            <person name="Roni V."/>
            <person name="Carpio R."/>
            <person name="Wissinger B."/>
        </authorList>
    </citation>
    <scope>NUCLEOTIDE SEQUENCE [LARGE SCALE MRNA] OF 1-20 (ISOFORM 2)</scope>
    <source>
        <tissue>Retina</tissue>
    </source>
</reference>
<feature type="chain" id="PRO_0000051364" description="WD repeat-containing protein 17">
    <location>
        <begin position="1"/>
        <end position="1322"/>
    </location>
</feature>
<feature type="repeat" description="WD 1">
    <location>
        <begin position="81"/>
        <end position="121"/>
    </location>
</feature>
<feature type="repeat" description="WD 2">
    <location>
        <begin position="123"/>
        <end position="164"/>
    </location>
</feature>
<feature type="repeat" description="WD 3">
    <location>
        <begin position="171"/>
        <end position="211"/>
    </location>
</feature>
<feature type="repeat" description="WD 4">
    <location>
        <begin position="221"/>
        <end position="261"/>
    </location>
</feature>
<feature type="repeat" description="WD 5">
    <location>
        <begin position="266"/>
        <end position="307"/>
    </location>
</feature>
<feature type="repeat" description="WD 6">
    <location>
        <begin position="391"/>
        <end position="431"/>
    </location>
</feature>
<feature type="repeat" description="WD 7">
    <location>
        <begin position="434"/>
        <end position="474"/>
    </location>
</feature>
<feature type="repeat" description="WD 8">
    <location>
        <begin position="478"/>
        <end position="518"/>
    </location>
</feature>
<feature type="repeat" description="WD 9">
    <location>
        <begin position="519"/>
        <end position="559"/>
    </location>
</feature>
<feature type="repeat" description="WD 10">
    <location>
        <begin position="564"/>
        <end position="604"/>
    </location>
</feature>
<feature type="repeat" description="WD 11">
    <location>
        <begin position="607"/>
        <end position="647"/>
    </location>
</feature>
<feature type="repeat" description="WD 12">
    <location>
        <begin position="650"/>
        <end position="690"/>
    </location>
</feature>
<feature type="region of interest" description="Disordered" evidence="1">
    <location>
        <begin position="328"/>
        <end position="352"/>
    </location>
</feature>
<feature type="compositionally biased region" description="Polar residues" evidence="1">
    <location>
        <begin position="330"/>
        <end position="345"/>
    </location>
</feature>
<feature type="splice variant" id="VSP_047201" description="In isoform 2." evidence="4 5">
    <location>
        <begin position="1"/>
        <end position="24"/>
    </location>
</feature>
<feature type="splice variant" id="VSP_047202" description="In isoform 2." evidence="4 5">
    <original>CFPCVGYSVPFCYVNR</original>
    <variation>W</variation>
    <location>
        <begin position="1021"/>
        <end position="1036"/>
    </location>
</feature>
<feature type="sequence variant" id="VAR_062101" description="In dbSNP:rs59567138.">
    <original>I</original>
    <variation>V</variation>
    <location>
        <position position="418"/>
    </location>
</feature>
<feature type="sequence variant" id="VAR_047399" description="In dbSNP:rs4690661." evidence="3">
    <original>A</original>
    <variation>T</variation>
    <location>
        <position position="814"/>
    </location>
</feature>
<feature type="sequence variant" id="VAR_047400" description="In dbSNP:rs7693453." evidence="3">
    <original>C</original>
    <variation>S</variation>
    <location>
        <position position="913"/>
    </location>
</feature>
<feature type="sequence variant" id="VAR_047401" description="In dbSNP:rs6810394.">
    <original>E</original>
    <variation>K</variation>
    <location>
        <position position="952"/>
    </location>
</feature>
<feature type="sequence variant" id="VAR_047402" description="In dbSNP:rs17625943." evidence="3">
    <original>A</original>
    <variation>T</variation>
    <location>
        <position position="1215"/>
    </location>
</feature>
<feature type="sequence variant" id="VAR_047403" description="In dbSNP:rs11736872." evidence="2">
    <original>A</original>
    <variation>T</variation>
    <location>
        <position position="1295"/>
    </location>
</feature>
<feature type="sequence conflict" description="In Ref. 3; BC146812." evidence="6" ref="3">
    <original>R</original>
    <variation>S</variation>
    <location>
        <position position="213"/>
    </location>
</feature>
<feature type="sequence conflict" description="In Ref. 3; BC146812." evidence="6" ref="3">
    <original>H</original>
    <variation>Q</variation>
    <location>
        <position position="783"/>
    </location>
</feature>
<evidence type="ECO:0000256" key="1">
    <source>
        <dbReference type="SAM" id="MobiDB-lite"/>
    </source>
</evidence>
<evidence type="ECO:0000269" key="2">
    <source>
    </source>
</evidence>
<evidence type="ECO:0000269" key="3">
    <source>
    </source>
</evidence>
<evidence type="ECO:0000303" key="4">
    <source>
    </source>
</evidence>
<evidence type="ECO:0000303" key="5">
    <source>
    </source>
</evidence>
<evidence type="ECO:0000305" key="6"/>
<gene>
    <name type="primary">WDR17</name>
</gene>
<proteinExistence type="evidence at protein level"/>